<accession>A1SRV2</accession>
<organism>
    <name type="scientific">Psychromonas ingrahamii (strain DSM 17664 / CCUG 51855 / 37)</name>
    <dbReference type="NCBI Taxonomy" id="357804"/>
    <lineage>
        <taxon>Bacteria</taxon>
        <taxon>Pseudomonadati</taxon>
        <taxon>Pseudomonadota</taxon>
        <taxon>Gammaproteobacteria</taxon>
        <taxon>Alteromonadales</taxon>
        <taxon>Psychromonadaceae</taxon>
        <taxon>Psychromonas</taxon>
    </lineage>
</organism>
<dbReference type="EC" id="2.2.1.9" evidence="1"/>
<dbReference type="EMBL" id="CP000510">
    <property type="protein sequence ID" value="ABM02217.1"/>
    <property type="molecule type" value="Genomic_DNA"/>
</dbReference>
<dbReference type="RefSeq" id="WP_011768776.1">
    <property type="nucleotide sequence ID" value="NC_008709.1"/>
</dbReference>
<dbReference type="SMR" id="A1SRV2"/>
<dbReference type="STRING" id="357804.Ping_0352"/>
<dbReference type="KEGG" id="pin:Ping_0352"/>
<dbReference type="eggNOG" id="COG1165">
    <property type="taxonomic scope" value="Bacteria"/>
</dbReference>
<dbReference type="HOGENOM" id="CLU_006051_3_0_6"/>
<dbReference type="OrthoDB" id="9791859at2"/>
<dbReference type="UniPathway" id="UPA00079"/>
<dbReference type="UniPathway" id="UPA01057">
    <property type="reaction ID" value="UER00164"/>
</dbReference>
<dbReference type="Proteomes" id="UP000000639">
    <property type="component" value="Chromosome"/>
</dbReference>
<dbReference type="GO" id="GO:0070204">
    <property type="term" value="F:2-succinyl-5-enolpyruvyl-6-hydroxy-3-cyclohexene-1-carboxylic-acid synthase activity"/>
    <property type="evidence" value="ECO:0007669"/>
    <property type="project" value="UniProtKB-UniRule"/>
</dbReference>
<dbReference type="GO" id="GO:0000287">
    <property type="term" value="F:magnesium ion binding"/>
    <property type="evidence" value="ECO:0007669"/>
    <property type="project" value="UniProtKB-UniRule"/>
</dbReference>
<dbReference type="GO" id="GO:0030145">
    <property type="term" value="F:manganese ion binding"/>
    <property type="evidence" value="ECO:0007669"/>
    <property type="project" value="UniProtKB-UniRule"/>
</dbReference>
<dbReference type="GO" id="GO:0030976">
    <property type="term" value="F:thiamine pyrophosphate binding"/>
    <property type="evidence" value="ECO:0007669"/>
    <property type="project" value="UniProtKB-UniRule"/>
</dbReference>
<dbReference type="GO" id="GO:0009234">
    <property type="term" value="P:menaquinone biosynthetic process"/>
    <property type="evidence" value="ECO:0007669"/>
    <property type="project" value="UniProtKB-UniRule"/>
</dbReference>
<dbReference type="CDD" id="cd07037">
    <property type="entry name" value="TPP_PYR_MenD"/>
    <property type="match status" value="1"/>
</dbReference>
<dbReference type="CDD" id="cd02009">
    <property type="entry name" value="TPP_SHCHC_synthase"/>
    <property type="match status" value="1"/>
</dbReference>
<dbReference type="Gene3D" id="3.40.50.970">
    <property type="match status" value="2"/>
</dbReference>
<dbReference type="Gene3D" id="3.40.50.1220">
    <property type="entry name" value="TPP-binding domain"/>
    <property type="match status" value="1"/>
</dbReference>
<dbReference type="HAMAP" id="MF_01659">
    <property type="entry name" value="MenD"/>
    <property type="match status" value="1"/>
</dbReference>
<dbReference type="InterPro" id="IPR029035">
    <property type="entry name" value="DHS-like_NAD/FAD-binding_dom"/>
</dbReference>
<dbReference type="InterPro" id="IPR004433">
    <property type="entry name" value="MenaQ_synth_MenD"/>
</dbReference>
<dbReference type="InterPro" id="IPR032264">
    <property type="entry name" value="MenD_middle"/>
</dbReference>
<dbReference type="InterPro" id="IPR029061">
    <property type="entry name" value="THDP-binding"/>
</dbReference>
<dbReference type="InterPro" id="IPR012001">
    <property type="entry name" value="Thiamin_PyroP_enz_TPP-bd_dom"/>
</dbReference>
<dbReference type="InterPro" id="IPR011766">
    <property type="entry name" value="TPP_enzyme_TPP-bd"/>
</dbReference>
<dbReference type="NCBIfam" id="TIGR00173">
    <property type="entry name" value="menD"/>
    <property type="match status" value="1"/>
</dbReference>
<dbReference type="PANTHER" id="PTHR42916">
    <property type="entry name" value="2-SUCCINYL-5-ENOLPYRUVYL-6-HYDROXY-3-CYCLOHEXENE-1-CARBOXYLATE SYNTHASE"/>
    <property type="match status" value="1"/>
</dbReference>
<dbReference type="PANTHER" id="PTHR42916:SF1">
    <property type="entry name" value="PROTEIN PHYLLO, CHLOROPLASTIC"/>
    <property type="match status" value="1"/>
</dbReference>
<dbReference type="Pfam" id="PF02775">
    <property type="entry name" value="TPP_enzyme_C"/>
    <property type="match status" value="1"/>
</dbReference>
<dbReference type="Pfam" id="PF16582">
    <property type="entry name" value="TPP_enzyme_M_2"/>
    <property type="match status" value="1"/>
</dbReference>
<dbReference type="Pfam" id="PF02776">
    <property type="entry name" value="TPP_enzyme_N"/>
    <property type="match status" value="1"/>
</dbReference>
<dbReference type="PIRSF" id="PIRSF004983">
    <property type="entry name" value="MenD"/>
    <property type="match status" value="1"/>
</dbReference>
<dbReference type="SUPFAM" id="SSF52467">
    <property type="entry name" value="DHS-like NAD/FAD-binding domain"/>
    <property type="match status" value="1"/>
</dbReference>
<dbReference type="SUPFAM" id="SSF52518">
    <property type="entry name" value="Thiamin diphosphate-binding fold (THDP-binding)"/>
    <property type="match status" value="2"/>
</dbReference>
<protein>
    <recommendedName>
        <fullName evidence="1">2-succinyl-5-enolpyruvyl-6-hydroxy-3-cyclohexene-1-carboxylate synthase</fullName>
        <shortName evidence="1">SEPHCHC synthase</shortName>
        <ecNumber evidence="1">2.2.1.9</ecNumber>
    </recommendedName>
    <alternativeName>
        <fullName evidence="1">Menaquinone biosynthesis protein MenD</fullName>
    </alternativeName>
</protein>
<sequence>MITTLYKEPASFAHEFSNINLLWASLFIEELVRNGISDFCIAPGSRSTPLTLAADQHTEAHTHVHFDERGLGFLALGLSLFSHKPVVIITTSGTAVANLYPAVIEAKLSAIPLIILSADRPVELIDCGANQAIDQYRIFSHYPVFFAQIPSATTHIKPNYLLTTINQGLQQQRQTPAAIHFNIAFSEPLYPQTATLNYQGYLQSLKQWLIDKQPFSQYFQNKDSFQAASNTQLRDKKVLVIAGRVTGINQAQAIAEFAALNNYPLLADLQSALTGNANNLHYYDLLLVNKQFTENLQQADIIVQFGGKLISKRLSQFIEGFAGEYLLVDPGNTRIDPAHSLRKRFVCSATQWIKSLQNKIPDIDKHWSQVLQQQNNYITKQIISPFLDNNLISEISVISALDKLLPADNPVFIGNSMPVRLSDMFFRQNAALPFSNRGASGIDGLLATASGIAKSCASITTLLIGDTSFLHDLNSLALLKQLQGPFVIIVFNNDGGAIFNLLPVPTQQKQDYYQLPHGLTFADSCRQFSIDYYQPESLDQFVGDYQKSLQNRLSLIEICVKNDQTYNHLEYIKEQIKYATF</sequence>
<feature type="chain" id="PRO_0000341812" description="2-succinyl-5-enolpyruvyl-6-hydroxy-3-cyclohexene-1-carboxylate synthase">
    <location>
        <begin position="1"/>
        <end position="581"/>
    </location>
</feature>
<reference key="1">
    <citation type="journal article" date="2008" name="BMC Genomics">
        <title>Genomics of an extreme psychrophile, Psychromonas ingrahamii.</title>
        <authorList>
            <person name="Riley M."/>
            <person name="Staley J.T."/>
            <person name="Danchin A."/>
            <person name="Wang T.Z."/>
            <person name="Brettin T.S."/>
            <person name="Hauser L.J."/>
            <person name="Land M.L."/>
            <person name="Thompson L.S."/>
        </authorList>
    </citation>
    <scope>NUCLEOTIDE SEQUENCE [LARGE SCALE GENOMIC DNA]</scope>
    <source>
        <strain>DSM 17664 / CCUG 51855 / 37</strain>
    </source>
</reference>
<gene>
    <name evidence="1" type="primary">menD</name>
    <name type="ordered locus">Ping_0352</name>
</gene>
<comment type="function">
    <text evidence="1">Catalyzes the thiamine diphosphate-dependent decarboxylation of 2-oxoglutarate and the subsequent addition of the resulting succinic semialdehyde-thiamine pyrophosphate anion to isochorismate to yield 2-succinyl-5-enolpyruvyl-6-hydroxy-3-cyclohexene-1-carboxylate (SEPHCHC).</text>
</comment>
<comment type="catalytic activity">
    <reaction evidence="1">
        <text>isochorismate + 2-oxoglutarate + H(+) = 5-enolpyruvoyl-6-hydroxy-2-succinyl-cyclohex-3-ene-1-carboxylate + CO2</text>
        <dbReference type="Rhea" id="RHEA:25593"/>
        <dbReference type="ChEBI" id="CHEBI:15378"/>
        <dbReference type="ChEBI" id="CHEBI:16526"/>
        <dbReference type="ChEBI" id="CHEBI:16810"/>
        <dbReference type="ChEBI" id="CHEBI:29780"/>
        <dbReference type="ChEBI" id="CHEBI:58818"/>
        <dbReference type="EC" id="2.2.1.9"/>
    </reaction>
</comment>
<comment type="cofactor">
    <cofactor evidence="1">
        <name>Mg(2+)</name>
        <dbReference type="ChEBI" id="CHEBI:18420"/>
    </cofactor>
    <cofactor evidence="1">
        <name>Mn(2+)</name>
        <dbReference type="ChEBI" id="CHEBI:29035"/>
    </cofactor>
</comment>
<comment type="cofactor">
    <cofactor evidence="1">
        <name>thiamine diphosphate</name>
        <dbReference type="ChEBI" id="CHEBI:58937"/>
    </cofactor>
    <text evidence="1">Binds 1 thiamine pyrophosphate per subunit.</text>
</comment>
<comment type="pathway">
    <text evidence="1">Quinol/quinone metabolism; 1,4-dihydroxy-2-naphthoate biosynthesis; 1,4-dihydroxy-2-naphthoate from chorismate: step 2/7.</text>
</comment>
<comment type="pathway">
    <text evidence="1">Quinol/quinone metabolism; menaquinone biosynthesis.</text>
</comment>
<comment type="subunit">
    <text evidence="1">Homodimer.</text>
</comment>
<comment type="similarity">
    <text evidence="1">Belongs to the TPP enzyme family. MenD subfamily.</text>
</comment>
<keyword id="KW-0460">Magnesium</keyword>
<keyword id="KW-0464">Manganese</keyword>
<keyword id="KW-0474">Menaquinone biosynthesis</keyword>
<keyword id="KW-0479">Metal-binding</keyword>
<keyword id="KW-1185">Reference proteome</keyword>
<keyword id="KW-0786">Thiamine pyrophosphate</keyword>
<keyword id="KW-0808">Transferase</keyword>
<proteinExistence type="inferred from homology"/>
<name>MEND_PSYIN</name>
<evidence type="ECO:0000255" key="1">
    <source>
        <dbReference type="HAMAP-Rule" id="MF_01659"/>
    </source>
</evidence>